<proteinExistence type="inferred from homology"/>
<keyword id="KW-0687">Ribonucleoprotein</keyword>
<keyword id="KW-0689">Ribosomal protein</keyword>
<keyword id="KW-0694">RNA-binding</keyword>
<keyword id="KW-0699">rRNA-binding</keyword>
<organism>
    <name type="scientific">Ectopseudomonas mendocina (strain ymp)</name>
    <name type="common">Pseudomonas mendocina</name>
    <dbReference type="NCBI Taxonomy" id="399739"/>
    <lineage>
        <taxon>Bacteria</taxon>
        <taxon>Pseudomonadati</taxon>
        <taxon>Pseudomonadota</taxon>
        <taxon>Gammaproteobacteria</taxon>
        <taxon>Pseudomonadales</taxon>
        <taxon>Pseudomonadaceae</taxon>
        <taxon>Ectopseudomonas</taxon>
    </lineage>
</organism>
<sequence length="228" mass="25541">MGQKVHPVGIRLGIVKDHTSVWYADGRNYADYLNADLKVRAYLQDKLKSASVSRIDIARPAQTARITIHTARPGIVIGKKGEDVEKLRQDLTKQMGVPVHINIEEIRKPELDGMLVAQSVAQQLERRVMFRRAMKRAVQNAMRIGAKGIKIQVSGRLGGAEIARTEWYREGRVPLHTLRADIDYATYEAHTTYGVIGVKVWIFKGEVIGGRTEELKPQAPAPRKAAKK</sequence>
<reference key="1">
    <citation type="submission" date="2007-04" db="EMBL/GenBank/DDBJ databases">
        <title>Complete sequence of Pseudomonas mendocina ymp.</title>
        <authorList>
            <consortium name="US DOE Joint Genome Institute"/>
            <person name="Copeland A."/>
            <person name="Lucas S."/>
            <person name="Lapidus A."/>
            <person name="Barry K."/>
            <person name="Glavina del Rio T."/>
            <person name="Dalin E."/>
            <person name="Tice H."/>
            <person name="Pitluck S."/>
            <person name="Kiss H."/>
            <person name="Brettin T."/>
            <person name="Detter J.C."/>
            <person name="Bruce D."/>
            <person name="Han C."/>
            <person name="Schmutz J."/>
            <person name="Larimer F."/>
            <person name="Land M."/>
            <person name="Hauser L."/>
            <person name="Kyrpides N."/>
            <person name="Mikhailova N."/>
            <person name="Hersman L."/>
            <person name="Dubois J."/>
            <person name="Maurice P."/>
            <person name="Richardson P."/>
        </authorList>
    </citation>
    <scope>NUCLEOTIDE SEQUENCE [LARGE SCALE GENOMIC DNA]</scope>
    <source>
        <strain>ymp</strain>
    </source>
</reference>
<protein>
    <recommendedName>
        <fullName evidence="1">Small ribosomal subunit protein uS3</fullName>
    </recommendedName>
    <alternativeName>
        <fullName evidence="2">30S ribosomal protein S3</fullName>
    </alternativeName>
</protein>
<name>RS3_ECTM1</name>
<dbReference type="EMBL" id="CP000680">
    <property type="protein sequence ID" value="ABP86650.1"/>
    <property type="molecule type" value="Genomic_DNA"/>
</dbReference>
<dbReference type="SMR" id="A4XZ84"/>
<dbReference type="STRING" id="399739.Pmen_3903"/>
<dbReference type="KEGG" id="pmy:Pmen_3903"/>
<dbReference type="eggNOG" id="COG0092">
    <property type="taxonomic scope" value="Bacteria"/>
</dbReference>
<dbReference type="HOGENOM" id="CLU_058591_0_2_6"/>
<dbReference type="OrthoDB" id="9806396at2"/>
<dbReference type="GO" id="GO:0022627">
    <property type="term" value="C:cytosolic small ribosomal subunit"/>
    <property type="evidence" value="ECO:0007669"/>
    <property type="project" value="TreeGrafter"/>
</dbReference>
<dbReference type="GO" id="GO:0003729">
    <property type="term" value="F:mRNA binding"/>
    <property type="evidence" value="ECO:0007669"/>
    <property type="project" value="UniProtKB-UniRule"/>
</dbReference>
<dbReference type="GO" id="GO:0019843">
    <property type="term" value="F:rRNA binding"/>
    <property type="evidence" value="ECO:0007669"/>
    <property type="project" value="UniProtKB-UniRule"/>
</dbReference>
<dbReference type="GO" id="GO:0003735">
    <property type="term" value="F:structural constituent of ribosome"/>
    <property type="evidence" value="ECO:0007669"/>
    <property type="project" value="InterPro"/>
</dbReference>
<dbReference type="GO" id="GO:0006412">
    <property type="term" value="P:translation"/>
    <property type="evidence" value="ECO:0007669"/>
    <property type="project" value="UniProtKB-UniRule"/>
</dbReference>
<dbReference type="CDD" id="cd02412">
    <property type="entry name" value="KH-II_30S_S3"/>
    <property type="match status" value="1"/>
</dbReference>
<dbReference type="FunFam" id="3.30.1140.32:FF:000001">
    <property type="entry name" value="30S ribosomal protein S3"/>
    <property type="match status" value="1"/>
</dbReference>
<dbReference type="FunFam" id="3.30.300.20:FF:000001">
    <property type="entry name" value="30S ribosomal protein S3"/>
    <property type="match status" value="1"/>
</dbReference>
<dbReference type="Gene3D" id="3.30.300.20">
    <property type="match status" value="1"/>
</dbReference>
<dbReference type="Gene3D" id="3.30.1140.32">
    <property type="entry name" value="Ribosomal protein S3, C-terminal domain"/>
    <property type="match status" value="1"/>
</dbReference>
<dbReference type="HAMAP" id="MF_01309_B">
    <property type="entry name" value="Ribosomal_uS3_B"/>
    <property type="match status" value="1"/>
</dbReference>
<dbReference type="InterPro" id="IPR004087">
    <property type="entry name" value="KH_dom"/>
</dbReference>
<dbReference type="InterPro" id="IPR015946">
    <property type="entry name" value="KH_dom-like_a/b"/>
</dbReference>
<dbReference type="InterPro" id="IPR004044">
    <property type="entry name" value="KH_dom_type_2"/>
</dbReference>
<dbReference type="InterPro" id="IPR009019">
    <property type="entry name" value="KH_sf_prok-type"/>
</dbReference>
<dbReference type="InterPro" id="IPR036419">
    <property type="entry name" value="Ribosomal_S3_C_sf"/>
</dbReference>
<dbReference type="InterPro" id="IPR005704">
    <property type="entry name" value="Ribosomal_uS3_bac-typ"/>
</dbReference>
<dbReference type="InterPro" id="IPR001351">
    <property type="entry name" value="Ribosomal_uS3_C"/>
</dbReference>
<dbReference type="InterPro" id="IPR018280">
    <property type="entry name" value="Ribosomal_uS3_CS"/>
</dbReference>
<dbReference type="NCBIfam" id="TIGR01009">
    <property type="entry name" value="rpsC_bact"/>
    <property type="match status" value="1"/>
</dbReference>
<dbReference type="PANTHER" id="PTHR11760">
    <property type="entry name" value="30S/40S RIBOSOMAL PROTEIN S3"/>
    <property type="match status" value="1"/>
</dbReference>
<dbReference type="PANTHER" id="PTHR11760:SF19">
    <property type="entry name" value="SMALL RIBOSOMAL SUBUNIT PROTEIN US3C"/>
    <property type="match status" value="1"/>
</dbReference>
<dbReference type="Pfam" id="PF07650">
    <property type="entry name" value="KH_2"/>
    <property type="match status" value="1"/>
</dbReference>
<dbReference type="Pfam" id="PF00189">
    <property type="entry name" value="Ribosomal_S3_C"/>
    <property type="match status" value="1"/>
</dbReference>
<dbReference type="SMART" id="SM00322">
    <property type="entry name" value="KH"/>
    <property type="match status" value="1"/>
</dbReference>
<dbReference type="SUPFAM" id="SSF54814">
    <property type="entry name" value="Prokaryotic type KH domain (KH-domain type II)"/>
    <property type="match status" value="1"/>
</dbReference>
<dbReference type="SUPFAM" id="SSF54821">
    <property type="entry name" value="Ribosomal protein S3 C-terminal domain"/>
    <property type="match status" value="1"/>
</dbReference>
<dbReference type="PROSITE" id="PS50823">
    <property type="entry name" value="KH_TYPE_2"/>
    <property type="match status" value="1"/>
</dbReference>
<dbReference type="PROSITE" id="PS00548">
    <property type="entry name" value="RIBOSOMAL_S3"/>
    <property type="match status" value="1"/>
</dbReference>
<accession>A4XZ84</accession>
<gene>
    <name evidence="1" type="primary">rpsC</name>
    <name type="ordered locus">Pmen_3903</name>
</gene>
<comment type="function">
    <text evidence="1">Binds the lower part of the 30S subunit head. Binds mRNA in the 70S ribosome, positioning it for translation.</text>
</comment>
<comment type="subunit">
    <text evidence="1">Part of the 30S ribosomal subunit. Forms a tight complex with proteins S10 and S14.</text>
</comment>
<comment type="similarity">
    <text evidence="1">Belongs to the universal ribosomal protein uS3 family.</text>
</comment>
<evidence type="ECO:0000255" key="1">
    <source>
        <dbReference type="HAMAP-Rule" id="MF_01309"/>
    </source>
</evidence>
<evidence type="ECO:0000305" key="2"/>
<feature type="chain" id="PRO_0000323302" description="Small ribosomal subunit protein uS3">
    <location>
        <begin position="1"/>
        <end position="228"/>
    </location>
</feature>
<feature type="domain" description="KH type-2" evidence="1">
    <location>
        <begin position="39"/>
        <end position="107"/>
    </location>
</feature>